<protein>
    <recommendedName>
        <fullName>Uncharacterized protein C3H1.02c</fullName>
    </recommendedName>
</protein>
<sequence length="1036" mass="117422">MLSDDTSFRQISSERILNYTVNKWINDATGFSVASVKTPTSRLQGSFVVATEAHDNLGCPHTLEHLCFMGSKKYPMNGILTKFAGRACGDINACTDVDYTSYELSAAEEDGFLRLLPVFADHILSPILSDEAFCTEVYHINGMGEESGVVYSEMQNTQSSETDVMFDCMRTSQYPVTSGYYYETGGHPSELRKLSIEKIREYHKEMYVPSNICLIVTGCINESRLLSCASGIVKEILANGIITPPTWTRPWCSTNVDYTIPEPILKTVKFSSEDEYTGSVSLAWNGPSALDAYTVFAIETLCEFLSESAVSPFGQTFVEIEDPFCSFVYFYVSLRVPCSIQLFFDSVPLEKINGLEQRALRLLAETKQIDMNRMKDYLKTRRDQYLTNLEAFPSSLFMKILTLDHVYGSREGKDLPNLLKMLEYNRLLEEWEEKDWLKLLKKWFVENNSVTVIALPSFEMAENIKKENAEQLNKRRCLLGASGLEKLAEKLKKSKEKNEQKLSVNLISSFRISDPESIRFYSSTTARTRSAGQPFDNEVQTYIDTDVSSENPFIQFDHIDSSFVQLATYIDTSMIPSSLKPYLSVFAKYIEAAPALLSGTIPTPYHEVVKQLERDTVSLNVSLSFDTSSCGYAYYETKRELLSIEIKVTRENYEKGVYWIRNLLAKTVWDRERMLSVINQQLADIPFQKRDAEFILPSYFDIRLYNDCSLKYSLNTLSQEKILRELRDKLQNDHSSIFDAFQKMRNYMLQHQAIRIHVIGDILKLPQPISTWNKLLDSECHRNPNMEFLSTFSKNYLKPQEFGSSSSLTVIPMPSNESSDLVFSIPGITSWLDPSLPVIVLIANYLGLMDGPFWNTIRGSGLAYGFNMSIDVDGGVLYYCINTSPDVYKAWASSRDLVKSLISGEVQVSSFDLESAKCVSYSIVSELENNAIYSSKNSFTLLSIKGLNKDEDHKFLEKVKQVTLQQFLEGLKIYCLPFFSSSNNLAVITSSLAKIEQTVEQFTEEGFNVNVESLHEIQGIESESEDDLSVGGNDDN</sequence>
<proteinExistence type="predicted"/>
<keyword id="KW-1185">Reference proteome</keyword>
<name>YAN2_SCHPO</name>
<organism>
    <name type="scientific">Schizosaccharomyces pombe (strain 972 / ATCC 24843)</name>
    <name type="common">Fission yeast</name>
    <dbReference type="NCBI Taxonomy" id="284812"/>
    <lineage>
        <taxon>Eukaryota</taxon>
        <taxon>Fungi</taxon>
        <taxon>Dikarya</taxon>
        <taxon>Ascomycota</taxon>
        <taxon>Taphrinomycotina</taxon>
        <taxon>Schizosaccharomycetes</taxon>
        <taxon>Schizosaccharomycetales</taxon>
        <taxon>Schizosaccharomycetaceae</taxon>
        <taxon>Schizosaccharomyces</taxon>
    </lineage>
</organism>
<feature type="chain" id="PRO_0000178014" description="Uncharacterized protein C3H1.02c">
    <location>
        <begin position="1"/>
        <end position="1036"/>
    </location>
</feature>
<accession>Q10068</accession>
<reference key="1">
    <citation type="journal article" date="2002" name="Nature">
        <title>The genome sequence of Schizosaccharomyces pombe.</title>
        <authorList>
            <person name="Wood V."/>
            <person name="Gwilliam R."/>
            <person name="Rajandream M.A."/>
            <person name="Lyne M.H."/>
            <person name="Lyne R."/>
            <person name="Stewart A."/>
            <person name="Sgouros J.G."/>
            <person name="Peat N."/>
            <person name="Hayles J."/>
            <person name="Baker S.G."/>
            <person name="Basham D."/>
            <person name="Bowman S."/>
            <person name="Brooks K."/>
            <person name="Brown D."/>
            <person name="Brown S."/>
            <person name="Chillingworth T."/>
            <person name="Churcher C.M."/>
            <person name="Collins M."/>
            <person name="Connor R."/>
            <person name="Cronin A."/>
            <person name="Davis P."/>
            <person name="Feltwell T."/>
            <person name="Fraser A."/>
            <person name="Gentles S."/>
            <person name="Goble A."/>
            <person name="Hamlin N."/>
            <person name="Harris D.E."/>
            <person name="Hidalgo J."/>
            <person name="Hodgson G."/>
            <person name="Holroyd S."/>
            <person name="Hornsby T."/>
            <person name="Howarth S."/>
            <person name="Huckle E.J."/>
            <person name="Hunt S."/>
            <person name="Jagels K."/>
            <person name="James K.D."/>
            <person name="Jones L."/>
            <person name="Jones M."/>
            <person name="Leather S."/>
            <person name="McDonald S."/>
            <person name="McLean J."/>
            <person name="Mooney P."/>
            <person name="Moule S."/>
            <person name="Mungall K.L."/>
            <person name="Murphy L.D."/>
            <person name="Niblett D."/>
            <person name="Odell C."/>
            <person name="Oliver K."/>
            <person name="O'Neil S."/>
            <person name="Pearson D."/>
            <person name="Quail M.A."/>
            <person name="Rabbinowitsch E."/>
            <person name="Rutherford K.M."/>
            <person name="Rutter S."/>
            <person name="Saunders D."/>
            <person name="Seeger K."/>
            <person name="Sharp S."/>
            <person name="Skelton J."/>
            <person name="Simmonds M.N."/>
            <person name="Squares R."/>
            <person name="Squares S."/>
            <person name="Stevens K."/>
            <person name="Taylor K."/>
            <person name="Taylor R.G."/>
            <person name="Tivey A."/>
            <person name="Walsh S.V."/>
            <person name="Warren T."/>
            <person name="Whitehead S."/>
            <person name="Woodward J.R."/>
            <person name="Volckaert G."/>
            <person name="Aert R."/>
            <person name="Robben J."/>
            <person name="Grymonprez B."/>
            <person name="Weltjens I."/>
            <person name="Vanstreels E."/>
            <person name="Rieger M."/>
            <person name="Schaefer M."/>
            <person name="Mueller-Auer S."/>
            <person name="Gabel C."/>
            <person name="Fuchs M."/>
            <person name="Duesterhoeft A."/>
            <person name="Fritzc C."/>
            <person name="Holzer E."/>
            <person name="Moestl D."/>
            <person name="Hilbert H."/>
            <person name="Borzym K."/>
            <person name="Langer I."/>
            <person name="Beck A."/>
            <person name="Lehrach H."/>
            <person name="Reinhardt R."/>
            <person name="Pohl T.M."/>
            <person name="Eger P."/>
            <person name="Zimmermann W."/>
            <person name="Wedler H."/>
            <person name="Wambutt R."/>
            <person name="Purnelle B."/>
            <person name="Goffeau A."/>
            <person name="Cadieu E."/>
            <person name="Dreano S."/>
            <person name="Gloux S."/>
            <person name="Lelaure V."/>
            <person name="Mottier S."/>
            <person name="Galibert F."/>
            <person name="Aves S.J."/>
            <person name="Xiang Z."/>
            <person name="Hunt C."/>
            <person name="Moore K."/>
            <person name="Hurst S.M."/>
            <person name="Lucas M."/>
            <person name="Rochet M."/>
            <person name="Gaillardin C."/>
            <person name="Tallada V.A."/>
            <person name="Garzon A."/>
            <person name="Thode G."/>
            <person name="Daga R.R."/>
            <person name="Cruzado L."/>
            <person name="Jimenez J."/>
            <person name="Sanchez M."/>
            <person name="del Rey F."/>
            <person name="Benito J."/>
            <person name="Dominguez A."/>
            <person name="Revuelta J.L."/>
            <person name="Moreno S."/>
            <person name="Armstrong J."/>
            <person name="Forsburg S.L."/>
            <person name="Cerutti L."/>
            <person name="Lowe T."/>
            <person name="McCombie W.R."/>
            <person name="Paulsen I."/>
            <person name="Potashkin J."/>
            <person name="Shpakovski G.V."/>
            <person name="Ussery D."/>
            <person name="Barrell B.G."/>
            <person name="Nurse P."/>
        </authorList>
    </citation>
    <scope>NUCLEOTIDE SEQUENCE [LARGE SCALE GENOMIC DNA]</scope>
    <source>
        <strain>972 / ATCC 24843</strain>
    </source>
</reference>
<dbReference type="EMBL" id="CU329670">
    <property type="protein sequence ID" value="CAA92255.1"/>
    <property type="molecule type" value="Genomic_DNA"/>
</dbReference>
<dbReference type="PIR" id="T38734">
    <property type="entry name" value="T38734"/>
</dbReference>
<dbReference type="SMR" id="Q10068"/>
<dbReference type="FunCoup" id="Q10068">
    <property type="interactions" value="8"/>
</dbReference>
<dbReference type="STRING" id="284812.Q10068"/>
<dbReference type="iPTMnet" id="Q10068"/>
<dbReference type="PaxDb" id="4896-SPAC3H1.02c.1"/>
<dbReference type="EnsemblFungi" id="SPAC3H1.02c.1">
    <property type="protein sequence ID" value="SPAC3H1.02c.1:pep"/>
    <property type="gene ID" value="SPAC3H1.02c"/>
</dbReference>
<dbReference type="KEGG" id="spo:2543450"/>
<dbReference type="PomBase" id="SPAC3H1.02c"/>
<dbReference type="VEuPathDB" id="FungiDB:SPAC3H1.02c"/>
<dbReference type="eggNOG" id="KOG0961">
    <property type="taxonomic scope" value="Eukaryota"/>
</dbReference>
<dbReference type="HOGENOM" id="CLU_006065_0_0_1"/>
<dbReference type="InParanoid" id="Q10068"/>
<dbReference type="OMA" id="CVEGPFW"/>
<dbReference type="PhylomeDB" id="Q10068"/>
<dbReference type="PRO" id="PR:Q10068"/>
<dbReference type="Proteomes" id="UP000002485">
    <property type="component" value="Chromosome I"/>
</dbReference>
<dbReference type="GO" id="GO:0005759">
    <property type="term" value="C:mitochondrial matrix"/>
    <property type="evidence" value="ECO:0000266"/>
    <property type="project" value="PomBase"/>
</dbReference>
<dbReference type="GO" id="GO:0046872">
    <property type="term" value="F:metal ion binding"/>
    <property type="evidence" value="ECO:0007669"/>
    <property type="project" value="InterPro"/>
</dbReference>
<dbReference type="GO" id="GO:0004222">
    <property type="term" value="F:metalloendopeptidase activity"/>
    <property type="evidence" value="ECO:0000255"/>
    <property type="project" value="PomBase"/>
</dbReference>
<dbReference type="GO" id="GO:0035694">
    <property type="term" value="P:mitochondrial protein catabolic process"/>
    <property type="evidence" value="ECO:0000304"/>
    <property type="project" value="PomBase"/>
</dbReference>
<dbReference type="FunFam" id="3.30.830.10:FF:000015">
    <property type="entry name" value="Putative zinc metalloprotease"/>
    <property type="match status" value="1"/>
</dbReference>
<dbReference type="FunFam" id="3.30.830.10:FF:000031">
    <property type="entry name" value="Putative zinc metalloprotease"/>
    <property type="match status" value="1"/>
</dbReference>
<dbReference type="Gene3D" id="3.30.830.10">
    <property type="entry name" value="Metalloenzyme, LuxS/M16 peptidase-like"/>
    <property type="match status" value="4"/>
</dbReference>
<dbReference type="InterPro" id="IPR011249">
    <property type="entry name" value="Metalloenz_LuxS/M16"/>
</dbReference>
<dbReference type="InterPro" id="IPR011765">
    <property type="entry name" value="Pept_M16_N"/>
</dbReference>
<dbReference type="InterPro" id="IPR007863">
    <property type="entry name" value="Peptidase_M16_C"/>
</dbReference>
<dbReference type="PANTHER" id="PTHR43016:SF16">
    <property type="entry name" value="METALLOPROTEASE, PUTATIVE (AFU_ORTHOLOGUE AFUA_4G07610)-RELATED"/>
    <property type="match status" value="1"/>
</dbReference>
<dbReference type="PANTHER" id="PTHR43016">
    <property type="entry name" value="PRESEQUENCE PROTEASE"/>
    <property type="match status" value="1"/>
</dbReference>
<dbReference type="Pfam" id="PF00675">
    <property type="entry name" value="Peptidase_M16"/>
    <property type="match status" value="1"/>
</dbReference>
<dbReference type="Pfam" id="PF05193">
    <property type="entry name" value="Peptidase_M16_C"/>
    <property type="match status" value="1"/>
</dbReference>
<dbReference type="SUPFAM" id="SSF63411">
    <property type="entry name" value="LuxS/MPP-like metallohydrolase"/>
    <property type="match status" value="4"/>
</dbReference>
<gene>
    <name type="ORF">SPAC3H1.02c</name>
</gene>